<accession>P0A9F0</accession>
<accession>P33023</accession>
<protein>
    <recommendedName>
        <fullName evidence="1">Regulatory protein YeiL</fullName>
    </recommendedName>
</protein>
<reference key="1">
    <citation type="journal article" date="2001" name="Nature">
        <title>Genome sequence of enterohaemorrhagic Escherichia coli O157:H7.</title>
        <authorList>
            <person name="Perna N.T."/>
            <person name="Plunkett G. III"/>
            <person name="Burland V."/>
            <person name="Mau B."/>
            <person name="Glasner J.D."/>
            <person name="Rose D.J."/>
            <person name="Mayhew G.F."/>
            <person name="Evans P.S."/>
            <person name="Gregor J."/>
            <person name="Kirkpatrick H.A."/>
            <person name="Posfai G."/>
            <person name="Hackett J."/>
            <person name="Klink S."/>
            <person name="Boutin A."/>
            <person name="Shao Y."/>
            <person name="Miller L."/>
            <person name="Grotbeck E.J."/>
            <person name="Davis N.W."/>
            <person name="Lim A."/>
            <person name="Dimalanta E.T."/>
            <person name="Potamousis K."/>
            <person name="Apodaca J."/>
            <person name="Anantharaman T.S."/>
            <person name="Lin J."/>
            <person name="Yen G."/>
            <person name="Schwartz D.C."/>
            <person name="Welch R.A."/>
            <person name="Blattner F.R."/>
        </authorList>
    </citation>
    <scope>NUCLEOTIDE SEQUENCE [LARGE SCALE GENOMIC DNA]</scope>
    <source>
        <strain>O157:H7 / EDL933 / ATCC 700927 / EHEC</strain>
    </source>
</reference>
<reference key="2">
    <citation type="journal article" date="2001" name="DNA Res.">
        <title>Complete genome sequence of enterohemorrhagic Escherichia coli O157:H7 and genomic comparison with a laboratory strain K-12.</title>
        <authorList>
            <person name="Hayashi T."/>
            <person name="Makino K."/>
            <person name="Ohnishi M."/>
            <person name="Kurokawa K."/>
            <person name="Ishii K."/>
            <person name="Yokoyama K."/>
            <person name="Han C.-G."/>
            <person name="Ohtsubo E."/>
            <person name="Nakayama K."/>
            <person name="Murata T."/>
            <person name="Tanaka M."/>
            <person name="Tobe T."/>
            <person name="Iida T."/>
            <person name="Takami H."/>
            <person name="Honda T."/>
            <person name="Sasakawa C."/>
            <person name="Ogasawara N."/>
            <person name="Yasunaga T."/>
            <person name="Kuhara S."/>
            <person name="Shiba T."/>
            <person name="Hattori M."/>
            <person name="Shinagawa H."/>
        </authorList>
    </citation>
    <scope>NUCLEOTIDE SEQUENCE [LARGE SCALE GENOMIC DNA]</scope>
    <source>
        <strain>O157:H7 / Sakai / RIMD 0509952 / EHEC</strain>
    </source>
</reference>
<comment type="function">
    <text evidence="1">Transcription regulator involved in mid-term, stationary-phase viability under nitrogen starvation. Might control expression of the salvage pathways or in some other way repress the recycling of nucleobases to nucleic acids and enhance their use as general nitrogen sources during nitrogen-limited growth.</text>
</comment>
<comment type="cofactor">
    <cofactor evidence="1">
        <name>[4Fe-4S] cluster</name>
        <dbReference type="ChEBI" id="CHEBI:49883"/>
    </cofactor>
    <text evidence="1">Binds 1 [4Fe-4S] cluster per subunit.</text>
</comment>
<comment type="subunit">
    <text evidence="1">Homodimer.</text>
</comment>
<comment type="subcellular location">
    <subcellularLocation>
        <location evidence="1">Cytoplasm</location>
    </subcellularLocation>
</comment>
<comment type="sequence caution" evidence="4">
    <conflict type="erroneous initiation">
        <sequence resource="EMBL-CDS" id="BAB36478"/>
    </conflict>
    <text>Extended N-terminus.</text>
</comment>
<keyword id="KW-0004">4Fe-4S</keyword>
<keyword id="KW-0010">Activator</keyword>
<keyword id="KW-0963">Cytoplasm</keyword>
<keyword id="KW-0238">DNA-binding</keyword>
<keyword id="KW-0408">Iron</keyword>
<keyword id="KW-0411">Iron-sulfur</keyword>
<keyword id="KW-0479">Metal-binding</keyword>
<keyword id="KW-1185">Reference proteome</keyword>
<keyword id="KW-0678">Repressor</keyword>
<keyword id="KW-0804">Transcription</keyword>
<keyword id="KW-0805">Transcription regulation</keyword>
<dbReference type="EMBL" id="AE005174">
    <property type="protein sequence ID" value="AAG57301.1"/>
    <property type="molecule type" value="Genomic_DNA"/>
</dbReference>
<dbReference type="EMBL" id="BA000007">
    <property type="protein sequence ID" value="BAB36478.2"/>
    <property type="status" value="ALT_INIT"/>
    <property type="molecule type" value="Genomic_DNA"/>
</dbReference>
<dbReference type="PIR" id="A85855">
    <property type="entry name" value="A85855"/>
</dbReference>
<dbReference type="PIR" id="G91010">
    <property type="entry name" value="G91010"/>
</dbReference>
<dbReference type="RefSeq" id="NP_311082.3">
    <property type="nucleotide sequence ID" value="NC_002695.1"/>
</dbReference>
<dbReference type="SMR" id="P0A9F0"/>
<dbReference type="STRING" id="155864.Z3420"/>
<dbReference type="GeneID" id="916759"/>
<dbReference type="KEGG" id="ece:Z3420"/>
<dbReference type="KEGG" id="ecs:ECs_3055"/>
<dbReference type="PATRIC" id="fig|386585.9.peg.3184"/>
<dbReference type="eggNOG" id="COG0664">
    <property type="taxonomic scope" value="Bacteria"/>
</dbReference>
<dbReference type="HOGENOM" id="CLU_075053_11_1_6"/>
<dbReference type="OMA" id="CQQNYLR"/>
<dbReference type="Proteomes" id="UP000000558">
    <property type="component" value="Chromosome"/>
</dbReference>
<dbReference type="Proteomes" id="UP000002519">
    <property type="component" value="Chromosome"/>
</dbReference>
<dbReference type="GO" id="GO:0005737">
    <property type="term" value="C:cytoplasm"/>
    <property type="evidence" value="ECO:0007669"/>
    <property type="project" value="UniProtKB-SubCell"/>
</dbReference>
<dbReference type="GO" id="GO:0051539">
    <property type="term" value="F:4 iron, 4 sulfur cluster binding"/>
    <property type="evidence" value="ECO:0007669"/>
    <property type="project" value="UniProtKB-KW"/>
</dbReference>
<dbReference type="GO" id="GO:0003677">
    <property type="term" value="F:DNA binding"/>
    <property type="evidence" value="ECO:0007669"/>
    <property type="project" value="UniProtKB-KW"/>
</dbReference>
<dbReference type="GO" id="GO:0046872">
    <property type="term" value="F:metal ion binding"/>
    <property type="evidence" value="ECO:0007669"/>
    <property type="project" value="UniProtKB-KW"/>
</dbReference>
<dbReference type="GO" id="GO:0006355">
    <property type="term" value="P:regulation of DNA-templated transcription"/>
    <property type="evidence" value="ECO:0007669"/>
    <property type="project" value="InterPro"/>
</dbReference>
<dbReference type="CDD" id="cd00038">
    <property type="entry name" value="CAP_ED"/>
    <property type="match status" value="1"/>
</dbReference>
<dbReference type="FunFam" id="2.60.120.10:FF:000167">
    <property type="entry name" value="DNA-binding transcriptional activator YeiL"/>
    <property type="match status" value="1"/>
</dbReference>
<dbReference type="Gene3D" id="2.60.120.10">
    <property type="entry name" value="Jelly Rolls"/>
    <property type="match status" value="1"/>
</dbReference>
<dbReference type="InterPro" id="IPR000595">
    <property type="entry name" value="cNMP-bd_dom"/>
</dbReference>
<dbReference type="InterPro" id="IPR018490">
    <property type="entry name" value="cNMP-bd_dom_sf"/>
</dbReference>
<dbReference type="InterPro" id="IPR012318">
    <property type="entry name" value="HTH_CRP"/>
</dbReference>
<dbReference type="InterPro" id="IPR014710">
    <property type="entry name" value="RmlC-like_jellyroll"/>
</dbReference>
<dbReference type="NCBIfam" id="NF007707">
    <property type="entry name" value="PRK10402.1"/>
    <property type="match status" value="1"/>
</dbReference>
<dbReference type="Pfam" id="PF00027">
    <property type="entry name" value="cNMP_binding"/>
    <property type="match status" value="1"/>
</dbReference>
<dbReference type="SMART" id="SM00100">
    <property type="entry name" value="cNMP"/>
    <property type="match status" value="1"/>
</dbReference>
<dbReference type="SUPFAM" id="SSF51206">
    <property type="entry name" value="cAMP-binding domain-like"/>
    <property type="match status" value="1"/>
</dbReference>
<dbReference type="PROSITE" id="PS50042">
    <property type="entry name" value="CNMP_BINDING_3"/>
    <property type="match status" value="1"/>
</dbReference>
<dbReference type="PROSITE" id="PS51063">
    <property type="entry name" value="HTH_CRP_2"/>
    <property type="match status" value="1"/>
</dbReference>
<evidence type="ECO:0000250" key="1">
    <source>
        <dbReference type="UniProtKB" id="P0A9E9"/>
    </source>
</evidence>
<evidence type="ECO:0000255" key="2"/>
<evidence type="ECO:0000255" key="3">
    <source>
        <dbReference type="PROSITE-ProRule" id="PRU00387"/>
    </source>
</evidence>
<evidence type="ECO:0000305" key="4"/>
<feature type="chain" id="PRO_0000100183" description="Regulatory protein YeiL">
    <location>
        <begin position="1"/>
        <end position="219"/>
    </location>
</feature>
<feature type="domain" description="HTH crp-type" evidence="3">
    <location>
        <begin position="136"/>
        <end position="199"/>
    </location>
</feature>
<feature type="DNA-binding region" description="H-T-H motif" evidence="3">
    <location>
        <begin position="158"/>
        <end position="181"/>
    </location>
</feature>
<feature type="region of interest" description="Sensory domain" evidence="2">
    <location>
        <begin position="19"/>
        <end position="97"/>
    </location>
</feature>
<feature type="region of interest" description="Dimer interface" evidence="2">
    <location>
        <begin position="111"/>
        <end position="131"/>
    </location>
</feature>
<feature type="binding site" evidence="2">
    <location>
        <position position="68"/>
    </location>
    <ligand>
        <name>[4Fe-4S] cluster</name>
        <dbReference type="ChEBI" id="CHEBI:49883"/>
    </ligand>
</feature>
<feature type="binding site" evidence="2">
    <location>
        <position position="91"/>
    </location>
    <ligand>
        <name>[4Fe-4S] cluster</name>
        <dbReference type="ChEBI" id="CHEBI:49883"/>
    </ligand>
</feature>
<feature type="binding site" evidence="2">
    <location>
        <position position="93"/>
    </location>
    <ligand>
        <name>[4Fe-4S] cluster</name>
        <dbReference type="ChEBI" id="CHEBI:49883"/>
    </ligand>
</feature>
<feature type="binding site" evidence="2">
    <location>
        <position position="116"/>
    </location>
    <ligand>
        <name>[4Fe-4S] cluster</name>
        <dbReference type="ChEBI" id="CHEBI:49883"/>
    </ligand>
</feature>
<proteinExistence type="inferred from homology"/>
<sequence>MSESAFKDCFLTDVSADTRLFHFLARDYIVQEGQQPSWLFYLTRGRARLYATLANGRVSLIDFFAAPCFIGEIELIDKDHEPRAVQAIEECWCLALPMKHYRPLLLNDTLFLRKLCVTLSHKNYRNIVSLTQNQSFPLVNRLAAFILLSQEGDLYHEKHTQAAEYLGVSYRHLLYVLAQFIHDGLLIKSKKGYLIKNRKQLSGLALEMDPENKFSGMMQ</sequence>
<gene>
    <name type="primary">yeiL</name>
    <name type="ordered locus">Z3420</name>
    <name type="ordered locus">ECs3055</name>
</gene>
<name>YEIL_ECO57</name>
<organism>
    <name type="scientific">Escherichia coli O157:H7</name>
    <dbReference type="NCBI Taxonomy" id="83334"/>
    <lineage>
        <taxon>Bacteria</taxon>
        <taxon>Pseudomonadati</taxon>
        <taxon>Pseudomonadota</taxon>
        <taxon>Gammaproteobacteria</taxon>
        <taxon>Enterobacterales</taxon>
        <taxon>Enterobacteriaceae</taxon>
        <taxon>Escherichia</taxon>
    </lineage>
</organism>